<dbReference type="EC" id="7.1.2.2" evidence="1"/>
<dbReference type="EMBL" id="CP000936">
    <property type="protein sequence ID" value="ACA36397.1"/>
    <property type="molecule type" value="Genomic_DNA"/>
</dbReference>
<dbReference type="RefSeq" id="WP_000094354.1">
    <property type="nucleotide sequence ID" value="NC_010380.1"/>
</dbReference>
<dbReference type="SMR" id="B1ICS9"/>
<dbReference type="KEGG" id="spv:SPH_1619"/>
<dbReference type="HOGENOM" id="CLU_022398_0_2_9"/>
<dbReference type="Proteomes" id="UP000002163">
    <property type="component" value="Chromosome"/>
</dbReference>
<dbReference type="GO" id="GO:0005886">
    <property type="term" value="C:plasma membrane"/>
    <property type="evidence" value="ECO:0007669"/>
    <property type="project" value="UniProtKB-SubCell"/>
</dbReference>
<dbReference type="GO" id="GO:0045259">
    <property type="term" value="C:proton-transporting ATP synthase complex"/>
    <property type="evidence" value="ECO:0007669"/>
    <property type="project" value="UniProtKB-KW"/>
</dbReference>
<dbReference type="GO" id="GO:0005524">
    <property type="term" value="F:ATP binding"/>
    <property type="evidence" value="ECO:0007669"/>
    <property type="project" value="UniProtKB-UniRule"/>
</dbReference>
<dbReference type="GO" id="GO:0016887">
    <property type="term" value="F:ATP hydrolysis activity"/>
    <property type="evidence" value="ECO:0007669"/>
    <property type="project" value="InterPro"/>
</dbReference>
<dbReference type="GO" id="GO:0046933">
    <property type="term" value="F:proton-transporting ATP synthase activity, rotational mechanism"/>
    <property type="evidence" value="ECO:0007669"/>
    <property type="project" value="UniProtKB-UniRule"/>
</dbReference>
<dbReference type="CDD" id="cd18110">
    <property type="entry name" value="ATP-synt_F1_beta_C"/>
    <property type="match status" value="1"/>
</dbReference>
<dbReference type="CDD" id="cd18115">
    <property type="entry name" value="ATP-synt_F1_beta_N"/>
    <property type="match status" value="1"/>
</dbReference>
<dbReference type="CDD" id="cd01133">
    <property type="entry name" value="F1-ATPase_beta_CD"/>
    <property type="match status" value="1"/>
</dbReference>
<dbReference type="FunFam" id="1.10.1140.10:FF:000001">
    <property type="entry name" value="ATP synthase subunit beta"/>
    <property type="match status" value="1"/>
</dbReference>
<dbReference type="FunFam" id="2.40.10.170:FF:000005">
    <property type="entry name" value="ATP synthase subunit beta"/>
    <property type="match status" value="1"/>
</dbReference>
<dbReference type="FunFam" id="3.40.50.300:FF:000004">
    <property type="entry name" value="ATP synthase subunit beta"/>
    <property type="match status" value="1"/>
</dbReference>
<dbReference type="Gene3D" id="2.40.10.170">
    <property type="match status" value="1"/>
</dbReference>
<dbReference type="Gene3D" id="1.10.1140.10">
    <property type="entry name" value="Bovine Mitochondrial F1-atpase, Atp Synthase Beta Chain, Chain D, domain 3"/>
    <property type="match status" value="1"/>
</dbReference>
<dbReference type="Gene3D" id="3.40.50.300">
    <property type="entry name" value="P-loop containing nucleotide triphosphate hydrolases"/>
    <property type="match status" value="1"/>
</dbReference>
<dbReference type="HAMAP" id="MF_01347">
    <property type="entry name" value="ATP_synth_beta_bact"/>
    <property type="match status" value="1"/>
</dbReference>
<dbReference type="InterPro" id="IPR003593">
    <property type="entry name" value="AAA+_ATPase"/>
</dbReference>
<dbReference type="InterPro" id="IPR055190">
    <property type="entry name" value="ATP-synt_VA_C"/>
</dbReference>
<dbReference type="InterPro" id="IPR005722">
    <property type="entry name" value="ATP_synth_F1_bsu"/>
</dbReference>
<dbReference type="InterPro" id="IPR020003">
    <property type="entry name" value="ATPase_a/bsu_AS"/>
</dbReference>
<dbReference type="InterPro" id="IPR050053">
    <property type="entry name" value="ATPase_alpha/beta_chains"/>
</dbReference>
<dbReference type="InterPro" id="IPR004100">
    <property type="entry name" value="ATPase_F1/V1/A1_a/bsu_N"/>
</dbReference>
<dbReference type="InterPro" id="IPR036121">
    <property type="entry name" value="ATPase_F1/V1/A1_a/bsu_N_sf"/>
</dbReference>
<dbReference type="InterPro" id="IPR000194">
    <property type="entry name" value="ATPase_F1/V1/A1_a/bsu_nucl-bd"/>
</dbReference>
<dbReference type="InterPro" id="IPR024034">
    <property type="entry name" value="ATPase_F1/V1_b/a_C"/>
</dbReference>
<dbReference type="InterPro" id="IPR027417">
    <property type="entry name" value="P-loop_NTPase"/>
</dbReference>
<dbReference type="NCBIfam" id="TIGR01039">
    <property type="entry name" value="atpD"/>
    <property type="match status" value="1"/>
</dbReference>
<dbReference type="PANTHER" id="PTHR15184">
    <property type="entry name" value="ATP SYNTHASE"/>
    <property type="match status" value="1"/>
</dbReference>
<dbReference type="PANTHER" id="PTHR15184:SF71">
    <property type="entry name" value="ATP SYNTHASE SUBUNIT BETA, MITOCHONDRIAL"/>
    <property type="match status" value="1"/>
</dbReference>
<dbReference type="Pfam" id="PF00006">
    <property type="entry name" value="ATP-synt_ab"/>
    <property type="match status" value="1"/>
</dbReference>
<dbReference type="Pfam" id="PF02874">
    <property type="entry name" value="ATP-synt_ab_N"/>
    <property type="match status" value="1"/>
</dbReference>
<dbReference type="Pfam" id="PF22919">
    <property type="entry name" value="ATP-synt_VA_C"/>
    <property type="match status" value="1"/>
</dbReference>
<dbReference type="SMART" id="SM00382">
    <property type="entry name" value="AAA"/>
    <property type="match status" value="1"/>
</dbReference>
<dbReference type="SUPFAM" id="SSF47917">
    <property type="entry name" value="C-terminal domain of alpha and beta subunits of F1 ATP synthase"/>
    <property type="match status" value="1"/>
</dbReference>
<dbReference type="SUPFAM" id="SSF50615">
    <property type="entry name" value="N-terminal domain of alpha and beta subunits of F1 ATP synthase"/>
    <property type="match status" value="1"/>
</dbReference>
<dbReference type="SUPFAM" id="SSF52540">
    <property type="entry name" value="P-loop containing nucleoside triphosphate hydrolases"/>
    <property type="match status" value="1"/>
</dbReference>
<dbReference type="PROSITE" id="PS00152">
    <property type="entry name" value="ATPASE_ALPHA_BETA"/>
    <property type="match status" value="1"/>
</dbReference>
<keyword id="KW-0066">ATP synthesis</keyword>
<keyword id="KW-0067">ATP-binding</keyword>
<keyword id="KW-1003">Cell membrane</keyword>
<keyword id="KW-0139">CF(1)</keyword>
<keyword id="KW-0375">Hydrogen ion transport</keyword>
<keyword id="KW-0406">Ion transport</keyword>
<keyword id="KW-0472">Membrane</keyword>
<keyword id="KW-0547">Nucleotide-binding</keyword>
<keyword id="KW-1278">Translocase</keyword>
<keyword id="KW-0813">Transport</keyword>
<name>ATPB_STRPI</name>
<gene>
    <name evidence="1" type="primary">atpD</name>
    <name type="ordered locus">SPH_1619</name>
</gene>
<proteinExistence type="inferred from homology"/>
<comment type="function">
    <text evidence="1">Produces ATP from ADP in the presence of a proton gradient across the membrane. The catalytic sites are hosted primarily by the beta subunits.</text>
</comment>
<comment type="catalytic activity">
    <reaction evidence="1">
        <text>ATP + H2O + 4 H(+)(in) = ADP + phosphate + 5 H(+)(out)</text>
        <dbReference type="Rhea" id="RHEA:57720"/>
        <dbReference type="ChEBI" id="CHEBI:15377"/>
        <dbReference type="ChEBI" id="CHEBI:15378"/>
        <dbReference type="ChEBI" id="CHEBI:30616"/>
        <dbReference type="ChEBI" id="CHEBI:43474"/>
        <dbReference type="ChEBI" id="CHEBI:456216"/>
        <dbReference type="EC" id="7.1.2.2"/>
    </reaction>
</comment>
<comment type="subunit">
    <text evidence="1">F-type ATPases have 2 components, CF(1) - the catalytic core - and CF(0) - the membrane proton channel. CF(1) has five subunits: alpha(3), beta(3), gamma(1), delta(1), epsilon(1). CF(0) has three main subunits: a(1), b(2) and c(9-12). The alpha and beta chains form an alternating ring which encloses part of the gamma chain. CF(1) is attached to CF(0) by a central stalk formed by the gamma and epsilon chains, while a peripheral stalk is formed by the delta and b chains.</text>
</comment>
<comment type="subcellular location">
    <subcellularLocation>
        <location evidence="1">Cell membrane</location>
        <topology evidence="1">Peripheral membrane protein</topology>
    </subcellularLocation>
</comment>
<comment type="similarity">
    <text evidence="1">Belongs to the ATPase alpha/beta chains family.</text>
</comment>
<sequence>MSSGKIAQVIGPVVDVLFAAGEKLPEINNALVVYKNDERKTKIVLEVALELGDGMVRTIAMESTDGLTRGMEVLDTGRPISVPVGKETLGRVFNVLGDTIDLEAPFTEDAERQPIHKKAPTFDELSTSSEILETGIKVIDLLAPYLKGGKVGLFGGAGVGKTVLIQELIHNIAQEHGGISVFAGVGERTREGNDLYWEMKESGVIEKTAMVFGQMNEPPGARMRVALTGLTIAEYFRDVEGQDVLLFIDNIFRFTQAGSEVSALLGRMPSAVGYQPTLATEMGQLQERITSTKKGSVTSIQAIYVPADDYTDPAPATAFAHLDSTTNLERKLVQLGIYPAVDPLASSSRALAPEIVGEEHYAVAAEVKRVLQRYHELQDIIAILGMDELSDEEKTLVARARRIQFFLSQNFNVAEQFTGQPGSYVPVAETVRGFKEILDGKYDHLPEDAFRGVGSIEDVIAKAEKMGF</sequence>
<reference key="1">
    <citation type="journal article" date="2010" name="Genome Biol.">
        <title>Structure and dynamics of the pan-genome of Streptococcus pneumoniae and closely related species.</title>
        <authorList>
            <person name="Donati C."/>
            <person name="Hiller N.L."/>
            <person name="Tettelin H."/>
            <person name="Muzzi A."/>
            <person name="Croucher N.J."/>
            <person name="Angiuoli S.V."/>
            <person name="Oggioni M."/>
            <person name="Dunning Hotopp J.C."/>
            <person name="Hu F.Z."/>
            <person name="Riley D.R."/>
            <person name="Covacci A."/>
            <person name="Mitchell T.J."/>
            <person name="Bentley S.D."/>
            <person name="Kilian M."/>
            <person name="Ehrlich G.D."/>
            <person name="Rappuoli R."/>
            <person name="Moxon E.R."/>
            <person name="Masignani V."/>
        </authorList>
    </citation>
    <scope>NUCLEOTIDE SEQUENCE [LARGE SCALE GENOMIC DNA]</scope>
    <source>
        <strain>Hungary19A-6</strain>
    </source>
</reference>
<accession>B1ICS9</accession>
<evidence type="ECO:0000255" key="1">
    <source>
        <dbReference type="HAMAP-Rule" id="MF_01347"/>
    </source>
</evidence>
<protein>
    <recommendedName>
        <fullName evidence="1">ATP synthase subunit beta</fullName>
        <ecNumber evidence="1">7.1.2.2</ecNumber>
    </recommendedName>
    <alternativeName>
        <fullName evidence="1">ATP synthase F1 sector subunit beta</fullName>
    </alternativeName>
    <alternativeName>
        <fullName evidence="1">F-ATPase subunit beta</fullName>
    </alternativeName>
</protein>
<feature type="chain" id="PRO_1000143553" description="ATP synthase subunit beta">
    <location>
        <begin position="1"/>
        <end position="468"/>
    </location>
</feature>
<feature type="binding site" evidence="1">
    <location>
        <begin position="155"/>
        <end position="162"/>
    </location>
    <ligand>
        <name>ATP</name>
        <dbReference type="ChEBI" id="CHEBI:30616"/>
    </ligand>
</feature>
<organism>
    <name type="scientific">Streptococcus pneumoniae (strain Hungary19A-6)</name>
    <dbReference type="NCBI Taxonomy" id="487214"/>
    <lineage>
        <taxon>Bacteria</taxon>
        <taxon>Bacillati</taxon>
        <taxon>Bacillota</taxon>
        <taxon>Bacilli</taxon>
        <taxon>Lactobacillales</taxon>
        <taxon>Streptococcaceae</taxon>
        <taxon>Streptococcus</taxon>
    </lineage>
</organism>